<dbReference type="EMBL" id="CP000970">
    <property type="protein sequence ID" value="ACB18688.1"/>
    <property type="molecule type" value="Genomic_DNA"/>
</dbReference>
<dbReference type="RefSeq" id="WP_000829818.1">
    <property type="nucleotide sequence ID" value="NC_010498.1"/>
</dbReference>
<dbReference type="SMR" id="B1LGJ6"/>
<dbReference type="GeneID" id="98390344"/>
<dbReference type="KEGG" id="ecm:EcSMS35_3525"/>
<dbReference type="HOGENOM" id="CLU_046483_2_1_6"/>
<dbReference type="Proteomes" id="UP000007011">
    <property type="component" value="Chromosome"/>
</dbReference>
<dbReference type="GO" id="GO:0022627">
    <property type="term" value="C:cytosolic small ribosomal subunit"/>
    <property type="evidence" value="ECO:0007669"/>
    <property type="project" value="TreeGrafter"/>
</dbReference>
<dbReference type="GO" id="GO:0003723">
    <property type="term" value="F:RNA binding"/>
    <property type="evidence" value="ECO:0007669"/>
    <property type="project" value="TreeGrafter"/>
</dbReference>
<dbReference type="GO" id="GO:0003735">
    <property type="term" value="F:structural constituent of ribosome"/>
    <property type="evidence" value="ECO:0007669"/>
    <property type="project" value="InterPro"/>
</dbReference>
<dbReference type="GO" id="GO:0006412">
    <property type="term" value="P:translation"/>
    <property type="evidence" value="ECO:0007669"/>
    <property type="project" value="UniProtKB-UniRule"/>
</dbReference>
<dbReference type="FunFam" id="3.30.230.10:FF:000001">
    <property type="entry name" value="30S ribosomal protein S9"/>
    <property type="match status" value="1"/>
</dbReference>
<dbReference type="Gene3D" id="3.30.230.10">
    <property type="match status" value="1"/>
</dbReference>
<dbReference type="HAMAP" id="MF_00532_B">
    <property type="entry name" value="Ribosomal_uS9_B"/>
    <property type="match status" value="1"/>
</dbReference>
<dbReference type="InterPro" id="IPR020568">
    <property type="entry name" value="Ribosomal_Su5_D2-typ_SF"/>
</dbReference>
<dbReference type="InterPro" id="IPR000754">
    <property type="entry name" value="Ribosomal_uS9"/>
</dbReference>
<dbReference type="InterPro" id="IPR023035">
    <property type="entry name" value="Ribosomal_uS9_bac/plastid"/>
</dbReference>
<dbReference type="InterPro" id="IPR020574">
    <property type="entry name" value="Ribosomal_uS9_CS"/>
</dbReference>
<dbReference type="InterPro" id="IPR014721">
    <property type="entry name" value="Ribsml_uS5_D2-typ_fold_subgr"/>
</dbReference>
<dbReference type="NCBIfam" id="NF001099">
    <property type="entry name" value="PRK00132.1"/>
    <property type="match status" value="1"/>
</dbReference>
<dbReference type="PANTHER" id="PTHR21569">
    <property type="entry name" value="RIBOSOMAL PROTEIN S9"/>
    <property type="match status" value="1"/>
</dbReference>
<dbReference type="PANTHER" id="PTHR21569:SF1">
    <property type="entry name" value="SMALL RIBOSOMAL SUBUNIT PROTEIN US9M"/>
    <property type="match status" value="1"/>
</dbReference>
<dbReference type="Pfam" id="PF00380">
    <property type="entry name" value="Ribosomal_S9"/>
    <property type="match status" value="1"/>
</dbReference>
<dbReference type="SUPFAM" id="SSF54211">
    <property type="entry name" value="Ribosomal protein S5 domain 2-like"/>
    <property type="match status" value="1"/>
</dbReference>
<dbReference type="PROSITE" id="PS00360">
    <property type="entry name" value="RIBOSOMAL_S9"/>
    <property type="match status" value="1"/>
</dbReference>
<proteinExistence type="inferred from homology"/>
<name>RS9_ECOSM</name>
<organism>
    <name type="scientific">Escherichia coli (strain SMS-3-5 / SECEC)</name>
    <dbReference type="NCBI Taxonomy" id="439855"/>
    <lineage>
        <taxon>Bacteria</taxon>
        <taxon>Pseudomonadati</taxon>
        <taxon>Pseudomonadota</taxon>
        <taxon>Gammaproteobacteria</taxon>
        <taxon>Enterobacterales</taxon>
        <taxon>Enterobacteriaceae</taxon>
        <taxon>Escherichia</taxon>
    </lineage>
</organism>
<accession>B1LGJ6</accession>
<gene>
    <name evidence="1" type="primary">rpsI</name>
    <name type="ordered locus">EcSMS35_3525</name>
</gene>
<protein>
    <recommendedName>
        <fullName evidence="1">Small ribosomal subunit protein uS9</fullName>
    </recommendedName>
    <alternativeName>
        <fullName evidence="2">30S ribosomal protein S9</fullName>
    </alternativeName>
</protein>
<evidence type="ECO:0000255" key="1">
    <source>
        <dbReference type="HAMAP-Rule" id="MF_00532"/>
    </source>
</evidence>
<evidence type="ECO:0000305" key="2"/>
<comment type="similarity">
    <text evidence="1">Belongs to the universal ribosomal protein uS9 family.</text>
</comment>
<feature type="chain" id="PRO_1000128123" description="Small ribosomal subunit protein uS9">
    <location>
        <begin position="1"/>
        <end position="130"/>
    </location>
</feature>
<keyword id="KW-0687">Ribonucleoprotein</keyword>
<keyword id="KW-0689">Ribosomal protein</keyword>
<sequence>MAENQYYGTGRRKSSAARVFIKPGNGKIVINQRSLEQYFGRETARMVVRQPLELVDMVEKLDLYITVKGGGISGQAGAIRHGITRALMEYDESLRSELRKAGFVTRDARQVERKKVGLRKARRRPQFSKR</sequence>
<reference key="1">
    <citation type="journal article" date="2008" name="J. Bacteriol.">
        <title>Insights into the environmental resistance gene pool from the genome sequence of the multidrug-resistant environmental isolate Escherichia coli SMS-3-5.</title>
        <authorList>
            <person name="Fricke W.F."/>
            <person name="Wright M.S."/>
            <person name="Lindell A.H."/>
            <person name="Harkins D.M."/>
            <person name="Baker-Austin C."/>
            <person name="Ravel J."/>
            <person name="Stepanauskas R."/>
        </authorList>
    </citation>
    <scope>NUCLEOTIDE SEQUENCE [LARGE SCALE GENOMIC DNA]</scope>
    <source>
        <strain>SMS-3-5 / SECEC</strain>
    </source>
</reference>